<protein>
    <recommendedName>
        <fullName evidence="1">Queuine tRNA-ribosyltransferase</fullName>
        <ecNumber evidence="1">2.4.2.29</ecNumber>
    </recommendedName>
    <alternativeName>
        <fullName evidence="1">Guanine insertion enzyme</fullName>
    </alternativeName>
    <alternativeName>
        <fullName evidence="1">tRNA-guanine transglycosylase</fullName>
    </alternativeName>
</protein>
<accession>A4IRA9</accession>
<organism>
    <name type="scientific">Geobacillus thermodenitrificans (strain NG80-2)</name>
    <dbReference type="NCBI Taxonomy" id="420246"/>
    <lineage>
        <taxon>Bacteria</taxon>
        <taxon>Bacillati</taxon>
        <taxon>Bacillota</taxon>
        <taxon>Bacilli</taxon>
        <taxon>Bacillales</taxon>
        <taxon>Anoxybacillaceae</taxon>
        <taxon>Geobacillus</taxon>
    </lineage>
</organism>
<comment type="function">
    <text evidence="1">Catalyzes the base-exchange of a guanine (G) residue with the queuine precursor 7-aminomethyl-7-deazaguanine (PreQ1) at position 34 (anticodon wobble position) in tRNAs with GU(N) anticodons (tRNA-Asp, -Asn, -His and -Tyr). Catalysis occurs through a double-displacement mechanism. The nucleophile active site attacks the C1' of nucleotide 34 to detach the guanine base from the RNA, forming a covalent enzyme-RNA intermediate. The proton acceptor active site deprotonates the incoming PreQ1, allowing a nucleophilic attack on the C1' of the ribose to form the product. After dissociation, two additional enzymatic reactions on the tRNA convert PreQ1 to queuine (Q), resulting in the hypermodified nucleoside queuosine (7-(((4,5-cis-dihydroxy-2-cyclopenten-1-yl)amino)methyl)-7-deazaguanosine).</text>
</comment>
<comment type="catalytic activity">
    <reaction evidence="1">
        <text>7-aminomethyl-7-carbaguanine + guanosine(34) in tRNA = 7-aminomethyl-7-carbaguanosine(34) in tRNA + guanine</text>
        <dbReference type="Rhea" id="RHEA:24104"/>
        <dbReference type="Rhea" id="RHEA-COMP:10341"/>
        <dbReference type="Rhea" id="RHEA-COMP:10342"/>
        <dbReference type="ChEBI" id="CHEBI:16235"/>
        <dbReference type="ChEBI" id="CHEBI:58703"/>
        <dbReference type="ChEBI" id="CHEBI:74269"/>
        <dbReference type="ChEBI" id="CHEBI:82833"/>
        <dbReference type="EC" id="2.4.2.29"/>
    </reaction>
</comment>
<comment type="cofactor">
    <cofactor evidence="1">
        <name>Zn(2+)</name>
        <dbReference type="ChEBI" id="CHEBI:29105"/>
    </cofactor>
    <text evidence="1">Binds 1 zinc ion per subunit.</text>
</comment>
<comment type="pathway">
    <text evidence="1">tRNA modification; tRNA-queuosine biosynthesis.</text>
</comment>
<comment type="subunit">
    <text evidence="1">Homodimer. Within each dimer, one monomer is responsible for RNA recognition and catalysis, while the other monomer binds to the replacement base PreQ1.</text>
</comment>
<comment type="similarity">
    <text evidence="1">Belongs to the queuine tRNA-ribosyltransferase family.</text>
</comment>
<proteinExistence type="inferred from homology"/>
<sequence length="380" mass="43273">MTTPIRFELIKTCRQTGARLGILHTPHGSFETPMFMPVGTLATVKTLSPEELKEMGAGVILSNTYHLWLRPGHDIVAEAGGLHAFMNWDRGILTDSGGFQVFSLSEFRRIEEEGVYFRNHLNGDKLFLSPEKATEIQNALGADIIMAFDECPPYPATYDYMKRSVERTSRWAERCLKAHRRSNEQGLFGIVQGGEYEDLRRQSARDLVSLDFPGYAVGGLSVGEPKDVMNRVLEFTTPLLPTDKPRYLMGVGSPDSLIDGAIRGIDMFDCVLPTRIGRNGTVMTSEGRVVIKNAQYARDFTPLDPNCDCYTCRNYTRAYIRHLIKCDETFGIRLTSYHNVYFLIKLMEQVRQAIREDRLADFREEFFERYGFNKPNAKNF</sequence>
<feature type="chain" id="PRO_1000016796" description="Queuine tRNA-ribosyltransferase">
    <location>
        <begin position="1"/>
        <end position="380"/>
    </location>
</feature>
<feature type="region of interest" description="RNA binding" evidence="1">
    <location>
        <begin position="250"/>
        <end position="256"/>
    </location>
</feature>
<feature type="region of interest" description="RNA binding; important for wobble base 34 recognition" evidence="1">
    <location>
        <begin position="274"/>
        <end position="278"/>
    </location>
</feature>
<feature type="active site" description="Proton acceptor" evidence="1">
    <location>
        <position position="95"/>
    </location>
</feature>
<feature type="active site" description="Nucleophile" evidence="1">
    <location>
        <position position="269"/>
    </location>
</feature>
<feature type="binding site" evidence="1">
    <location>
        <begin position="95"/>
        <end position="99"/>
    </location>
    <ligand>
        <name>substrate</name>
    </ligand>
</feature>
<feature type="binding site" evidence="1">
    <location>
        <position position="149"/>
    </location>
    <ligand>
        <name>substrate</name>
    </ligand>
</feature>
<feature type="binding site" evidence="1">
    <location>
        <position position="192"/>
    </location>
    <ligand>
        <name>substrate</name>
    </ligand>
</feature>
<feature type="binding site" evidence="1">
    <location>
        <position position="219"/>
    </location>
    <ligand>
        <name>substrate</name>
    </ligand>
</feature>
<feature type="binding site" evidence="1">
    <location>
        <position position="307"/>
    </location>
    <ligand>
        <name>Zn(2+)</name>
        <dbReference type="ChEBI" id="CHEBI:29105"/>
    </ligand>
</feature>
<feature type="binding site" evidence="1">
    <location>
        <position position="309"/>
    </location>
    <ligand>
        <name>Zn(2+)</name>
        <dbReference type="ChEBI" id="CHEBI:29105"/>
    </ligand>
</feature>
<feature type="binding site" evidence="1">
    <location>
        <position position="312"/>
    </location>
    <ligand>
        <name>Zn(2+)</name>
        <dbReference type="ChEBI" id="CHEBI:29105"/>
    </ligand>
</feature>
<feature type="binding site" evidence="1">
    <location>
        <position position="338"/>
    </location>
    <ligand>
        <name>Zn(2+)</name>
        <dbReference type="ChEBI" id="CHEBI:29105"/>
    </ligand>
</feature>
<reference key="1">
    <citation type="journal article" date="2007" name="Proc. Natl. Acad. Sci. U.S.A.">
        <title>Genome and proteome of long-chain alkane degrading Geobacillus thermodenitrificans NG80-2 isolated from a deep-subsurface oil reservoir.</title>
        <authorList>
            <person name="Feng L."/>
            <person name="Wang W."/>
            <person name="Cheng J."/>
            <person name="Ren Y."/>
            <person name="Zhao G."/>
            <person name="Gao C."/>
            <person name="Tang Y."/>
            <person name="Liu X."/>
            <person name="Han W."/>
            <person name="Peng X."/>
            <person name="Liu R."/>
            <person name="Wang L."/>
        </authorList>
    </citation>
    <scope>NUCLEOTIDE SEQUENCE [LARGE SCALE GENOMIC DNA]</scope>
    <source>
        <strain>NG80-2</strain>
    </source>
</reference>
<name>TGT_GEOTN</name>
<evidence type="ECO:0000255" key="1">
    <source>
        <dbReference type="HAMAP-Rule" id="MF_00168"/>
    </source>
</evidence>
<keyword id="KW-0328">Glycosyltransferase</keyword>
<keyword id="KW-0479">Metal-binding</keyword>
<keyword id="KW-0671">Queuosine biosynthesis</keyword>
<keyword id="KW-0808">Transferase</keyword>
<keyword id="KW-0819">tRNA processing</keyword>
<keyword id="KW-0862">Zinc</keyword>
<dbReference type="EC" id="2.4.2.29" evidence="1"/>
<dbReference type="EMBL" id="CP000557">
    <property type="protein sequence ID" value="ABO67863.1"/>
    <property type="molecule type" value="Genomic_DNA"/>
</dbReference>
<dbReference type="RefSeq" id="WP_008881045.1">
    <property type="nucleotide sequence ID" value="NC_009328.1"/>
</dbReference>
<dbReference type="SMR" id="A4IRA9"/>
<dbReference type="GeneID" id="87623334"/>
<dbReference type="KEGG" id="gtn:GTNG_2518"/>
<dbReference type="eggNOG" id="COG0343">
    <property type="taxonomic scope" value="Bacteria"/>
</dbReference>
<dbReference type="HOGENOM" id="CLU_022060_0_1_9"/>
<dbReference type="UniPathway" id="UPA00392"/>
<dbReference type="Proteomes" id="UP000001578">
    <property type="component" value="Chromosome"/>
</dbReference>
<dbReference type="GO" id="GO:0005829">
    <property type="term" value="C:cytosol"/>
    <property type="evidence" value="ECO:0007669"/>
    <property type="project" value="TreeGrafter"/>
</dbReference>
<dbReference type="GO" id="GO:0046872">
    <property type="term" value="F:metal ion binding"/>
    <property type="evidence" value="ECO:0007669"/>
    <property type="project" value="UniProtKB-KW"/>
</dbReference>
<dbReference type="GO" id="GO:0008479">
    <property type="term" value="F:tRNA-guanosine(34) queuine transglycosylase activity"/>
    <property type="evidence" value="ECO:0007669"/>
    <property type="project" value="UniProtKB-UniRule"/>
</dbReference>
<dbReference type="GO" id="GO:0008616">
    <property type="term" value="P:queuosine biosynthetic process"/>
    <property type="evidence" value="ECO:0007669"/>
    <property type="project" value="UniProtKB-UniRule"/>
</dbReference>
<dbReference type="GO" id="GO:0002099">
    <property type="term" value="P:tRNA wobble guanine modification"/>
    <property type="evidence" value="ECO:0007669"/>
    <property type="project" value="TreeGrafter"/>
</dbReference>
<dbReference type="GO" id="GO:0101030">
    <property type="term" value="P:tRNA-guanine transglycosylation"/>
    <property type="evidence" value="ECO:0007669"/>
    <property type="project" value="InterPro"/>
</dbReference>
<dbReference type="FunFam" id="3.20.20.105:FF:000001">
    <property type="entry name" value="Queuine tRNA-ribosyltransferase"/>
    <property type="match status" value="1"/>
</dbReference>
<dbReference type="Gene3D" id="3.20.20.105">
    <property type="entry name" value="Queuine tRNA-ribosyltransferase-like"/>
    <property type="match status" value="1"/>
</dbReference>
<dbReference type="HAMAP" id="MF_00168">
    <property type="entry name" value="Q_tRNA_Tgt"/>
    <property type="match status" value="1"/>
</dbReference>
<dbReference type="InterPro" id="IPR050076">
    <property type="entry name" value="ArchSynthase1/Queuine_TRR"/>
</dbReference>
<dbReference type="InterPro" id="IPR004803">
    <property type="entry name" value="TGT"/>
</dbReference>
<dbReference type="InterPro" id="IPR036511">
    <property type="entry name" value="TGT-like_sf"/>
</dbReference>
<dbReference type="InterPro" id="IPR002616">
    <property type="entry name" value="tRNA_ribo_trans-like"/>
</dbReference>
<dbReference type="NCBIfam" id="TIGR00430">
    <property type="entry name" value="Q_tRNA_tgt"/>
    <property type="match status" value="1"/>
</dbReference>
<dbReference type="NCBIfam" id="TIGR00449">
    <property type="entry name" value="tgt_general"/>
    <property type="match status" value="1"/>
</dbReference>
<dbReference type="PANTHER" id="PTHR46499">
    <property type="entry name" value="QUEUINE TRNA-RIBOSYLTRANSFERASE"/>
    <property type="match status" value="1"/>
</dbReference>
<dbReference type="PANTHER" id="PTHR46499:SF1">
    <property type="entry name" value="QUEUINE TRNA-RIBOSYLTRANSFERASE"/>
    <property type="match status" value="1"/>
</dbReference>
<dbReference type="Pfam" id="PF01702">
    <property type="entry name" value="TGT"/>
    <property type="match status" value="1"/>
</dbReference>
<dbReference type="SUPFAM" id="SSF51713">
    <property type="entry name" value="tRNA-guanine transglycosylase"/>
    <property type="match status" value="1"/>
</dbReference>
<gene>
    <name evidence="1" type="primary">tgt</name>
    <name type="ordered locus">GTNG_2518</name>
</gene>